<dbReference type="EMBL" id="EU770625">
    <property type="protein sequence ID" value="ACF16362.1"/>
    <property type="molecule type" value="mRNA"/>
</dbReference>
<dbReference type="RefSeq" id="YP_002019759.1">
    <property type="nucleotide sequence ID" value="NC_011070.1"/>
</dbReference>
<dbReference type="GeneID" id="8658760"/>
<dbReference type="KEGG" id="vg:8658760"/>
<dbReference type="Proteomes" id="UP000001103">
    <property type="component" value="Genome"/>
</dbReference>
<dbReference type="GO" id="GO:0039615">
    <property type="term" value="C:T=1 icosahedral viral capsid"/>
    <property type="evidence" value="ECO:0007669"/>
    <property type="project" value="UniProtKB-KW"/>
</dbReference>
<reference key="1">
    <citation type="journal article" date="2009" name="J. Gen. Virol.">
        <title>Molecular characterization of the plant virus genus Ourmiavirus and evidence of inter-kingdom reassortment of viral genome segments as its possible route of origin.</title>
        <authorList>
            <person name="Rastgou M."/>
            <person name="Habibi M.K."/>
            <person name="Izadpanah K."/>
            <person name="Masenga V."/>
            <person name="Milne R.G."/>
            <person name="Wolf Y.I."/>
            <person name="Koonin E.V."/>
            <person name="Turina M."/>
        </authorList>
    </citation>
    <scope>NUCLEOTIDE SEQUENCE [GENOMIC RNA]</scope>
</reference>
<organismHost>
    <name type="scientific">Cucumis melo</name>
    <name type="common">Muskmelon</name>
    <dbReference type="NCBI Taxonomy" id="3656"/>
</organismHost>
<evidence type="ECO:0000256" key="1">
    <source>
        <dbReference type="SAM" id="MobiDB-lite"/>
    </source>
</evidence>
<evidence type="ECO:0000305" key="2"/>
<sequence length="210" mass="23809">MARLPKRKNRRNEKKKNANASRVQNVPRTFGLWKSTERIKYTTELKYLNSKCRAIRLHPDLVANNSFPTYCSAWKIDQVEFEFVSYMSPLAGHVGCVFFVVIPAKGLNSRISADEAESLQSAILWDEKGRLKITPISGPISRHPWTNLSQVVTPPQIPKGSTDGERQDLQSGYYLIFDSRKLFGKDLVDKQSVLGELSLTITATYWTSLS</sequence>
<name>CAPSD_OUMVV</name>
<organism>
    <name type="scientific">Ourmia melon virus (isolate Melon/Iran/VE9)</name>
    <name type="common">OuMV</name>
    <dbReference type="NCBI Taxonomy" id="652838"/>
    <lineage>
        <taxon>Viruses</taxon>
        <taxon>Riboviria</taxon>
        <taxon>Orthornavirae</taxon>
        <taxon>Lenarviricota</taxon>
        <taxon>Miaviricetes</taxon>
        <taxon>Ourlivirales</taxon>
        <taxon>Botourmiaviridae</taxon>
        <taxon>Ourmiavirus</taxon>
        <taxon>Ourmia melon virus</taxon>
    </lineage>
</organism>
<protein>
    <recommendedName>
        <fullName>Capsid protein</fullName>
        <shortName>CP</shortName>
    </recommendedName>
    <alternativeName>
        <fullName>Coat protein</fullName>
    </alternativeName>
</protein>
<proteinExistence type="evidence at transcript level"/>
<accession>B3VML3</accession>
<comment type="function">
    <text evidence="2">Capsid protein self-assembles to form a baciliform capsid with a T=1 symmetry, about 18 nm in diameter. The capsid encapsulates three genomic RNAs (Potential).</text>
</comment>
<comment type="subcellular location">
    <subcellularLocation>
        <location evidence="2">Virion</location>
    </subcellularLocation>
</comment>
<keyword id="KW-0167">Capsid protein</keyword>
<keyword id="KW-1185">Reference proteome</keyword>
<keyword id="KW-1140">T=1 icosahedral capsid protein</keyword>
<keyword id="KW-0946">Virion</keyword>
<feature type="chain" id="PRO_0000402476" description="Capsid protein">
    <location>
        <begin position="1"/>
        <end position="210"/>
    </location>
</feature>
<feature type="region of interest" description="Disordered" evidence="1">
    <location>
        <begin position="1"/>
        <end position="21"/>
    </location>
</feature>
<feature type="compositionally biased region" description="Basic residues" evidence="1">
    <location>
        <begin position="1"/>
        <end position="14"/>
    </location>
</feature>